<sequence>MGRITEDLIRRNAEHNDCVIFSLEELSLHQQEIERLEHIDKWCRDLKILYLQNNLIGKIENVSKLKKLEYLNLALNNIERIENLEGCEWLTKLDLTVNFIGELSSVKTLTHNIHLKELFLMGNPCADFDGYRQFVVVTLQQLKWLDGKEIERSERIQALQNYTSVEQQIREQEKAYCLRRAKEKEEAQRKLEEENESEDKKKSSTGFDGHWYTDIHTACPSATENQDYPQVPETQEEQHNTKESDDIEDDLAFWNKPSLFTPESRLETLRHMEKQRKAQDKLSEKKKKAKPPRTLITEDGKVLNVNEAKLDFSLKDDEKHNQIILDLAVYRYMDTSLIEVDVQPTYVRVMVKGKPFQLALSTEVQPDRSSAKRSQTTGHLLICMPKVGEMITGGQRTPTSVKTTSTSSREQTNPRKKQIERLEVDPSKHSCPDVSTIVQEKRHRPKRMESQPRDEPSEEDPDFEDNPEVPPLI</sequence>
<accession>O88978</accession>
<accession>Q9CUG2</accession>
<proteinExistence type="evidence at protein level"/>
<feature type="chain" id="PRO_0000084498" description="Dynein axonemal assembly factor 11">
    <location>
        <begin position="1"/>
        <end position="473"/>
    </location>
</feature>
<feature type="repeat" description="LRR 1">
    <location>
        <begin position="22"/>
        <end position="43"/>
    </location>
</feature>
<feature type="repeat" description="LRR 2">
    <location>
        <begin position="45"/>
        <end position="66"/>
    </location>
</feature>
<feature type="repeat" description="LRR 3">
    <location>
        <begin position="67"/>
        <end position="88"/>
    </location>
</feature>
<feature type="repeat" description="LRR 4">
    <location>
        <begin position="89"/>
        <end position="110"/>
    </location>
</feature>
<feature type="domain" description="LRRCT">
    <location>
        <begin position="123"/>
        <end position="161"/>
    </location>
</feature>
<feature type="domain" description="CS">
    <location>
        <begin position="305"/>
        <end position="402"/>
    </location>
</feature>
<feature type="region of interest" description="Disordered" evidence="3">
    <location>
        <begin position="188"/>
        <end position="244"/>
    </location>
</feature>
<feature type="region of interest" description="Disordered" evidence="3">
    <location>
        <begin position="273"/>
        <end position="292"/>
    </location>
</feature>
<feature type="region of interest" description="Disordered" evidence="3">
    <location>
        <begin position="387"/>
        <end position="473"/>
    </location>
</feature>
<feature type="coiled-coil region" evidence="2">
    <location>
        <begin position="153"/>
        <end position="205"/>
    </location>
</feature>
<feature type="compositionally biased region" description="Basic and acidic residues" evidence="3">
    <location>
        <begin position="188"/>
        <end position="202"/>
    </location>
</feature>
<feature type="compositionally biased region" description="Basic and acidic residues" evidence="3">
    <location>
        <begin position="273"/>
        <end position="283"/>
    </location>
</feature>
<feature type="compositionally biased region" description="Low complexity" evidence="3">
    <location>
        <begin position="397"/>
        <end position="408"/>
    </location>
</feature>
<feature type="compositionally biased region" description="Basic and acidic residues" evidence="3">
    <location>
        <begin position="417"/>
        <end position="431"/>
    </location>
</feature>
<feature type="compositionally biased region" description="Acidic residues" evidence="3">
    <location>
        <begin position="456"/>
        <end position="467"/>
    </location>
</feature>
<feature type="sequence conflict" description="In Ref. 2; BAB30161." evidence="6" ref="2">
    <original>N</original>
    <variation>I</variation>
    <location>
        <position position="225"/>
    </location>
</feature>
<feature type="sequence conflict" description="In Ref. 2; BAB30161." evidence="6" ref="2">
    <original>H</original>
    <variation>N</variation>
    <location>
        <position position="239"/>
    </location>
</feature>
<feature type="sequence conflict" description="In Ref. 2; BAB30161." evidence="6" ref="2">
    <original>LFTP</original>
    <variation>FFFL</variation>
    <location>
        <begin position="259"/>
        <end position="262"/>
    </location>
</feature>
<feature type="sequence conflict" description="In Ref. 2; BAB30161." evidence="6" ref="2">
    <original>HM</original>
    <variation>FL</variation>
    <location>
        <begin position="271"/>
        <end position="272"/>
    </location>
</feature>
<dbReference type="EMBL" id="AF092208">
    <property type="protein sequence ID" value="AAC61765.1"/>
    <property type="molecule type" value="mRNA"/>
</dbReference>
<dbReference type="EMBL" id="AK016236">
    <property type="protein sequence ID" value="BAB30161.1"/>
    <property type="molecule type" value="mRNA"/>
</dbReference>
<dbReference type="EMBL" id="AK077124">
    <property type="protein sequence ID" value="BAC36627.1"/>
    <property type="molecule type" value="mRNA"/>
</dbReference>
<dbReference type="EMBL" id="BC046277">
    <property type="protein sequence ID" value="AAH46277.1"/>
    <property type="molecule type" value="mRNA"/>
</dbReference>
<dbReference type="CCDS" id="CCDS49620.1"/>
<dbReference type="RefSeq" id="NP_062330.1">
    <property type="nucleotide sequence ID" value="NM_019457.2"/>
</dbReference>
<dbReference type="SMR" id="O88978"/>
<dbReference type="FunCoup" id="O88978">
    <property type="interactions" value="100"/>
</dbReference>
<dbReference type="STRING" id="10090.ENSMUSP00000023006"/>
<dbReference type="PhosphoSitePlus" id="O88978"/>
<dbReference type="SwissPalm" id="O88978"/>
<dbReference type="PaxDb" id="10090-ENSMUSP00000023006"/>
<dbReference type="ProteomicsDB" id="259451"/>
<dbReference type="Antibodypedia" id="14134">
    <property type="antibodies" value="248 antibodies from 20 providers"/>
</dbReference>
<dbReference type="DNASU" id="54562"/>
<dbReference type="Ensembl" id="ENSMUST00000023006.7">
    <property type="protein sequence ID" value="ENSMUSP00000023006.7"/>
    <property type="gene ID" value="ENSMUSG00000022375.7"/>
</dbReference>
<dbReference type="GeneID" id="54562"/>
<dbReference type="KEGG" id="mmu:54562"/>
<dbReference type="UCSC" id="uc011ztm.1">
    <property type="organism name" value="mouse"/>
</dbReference>
<dbReference type="AGR" id="MGI:1859553"/>
<dbReference type="CTD" id="23639"/>
<dbReference type="MGI" id="MGI:1859553">
    <property type="gene designation" value="Dnaaf11"/>
</dbReference>
<dbReference type="VEuPathDB" id="HostDB:ENSMUSG00000022375"/>
<dbReference type="eggNOG" id="KOG0531">
    <property type="taxonomic scope" value="Eukaryota"/>
</dbReference>
<dbReference type="GeneTree" id="ENSGT00940000158506"/>
<dbReference type="HOGENOM" id="CLU_034806_0_1_1"/>
<dbReference type="InParanoid" id="O88978"/>
<dbReference type="OMA" id="QHRAVIV"/>
<dbReference type="OrthoDB" id="10250990at2759"/>
<dbReference type="PhylomeDB" id="O88978"/>
<dbReference type="TreeFam" id="TF324815"/>
<dbReference type="BioGRID-ORCS" id="54562">
    <property type="hits" value="0 hits in 75 CRISPR screens"/>
</dbReference>
<dbReference type="ChiTaRS" id="Lrrc6">
    <property type="organism name" value="mouse"/>
</dbReference>
<dbReference type="PRO" id="PR:O88978"/>
<dbReference type="Proteomes" id="UP000000589">
    <property type="component" value="Chromosome 15"/>
</dbReference>
<dbReference type="RNAct" id="O88978">
    <property type="molecule type" value="protein"/>
</dbReference>
<dbReference type="Bgee" id="ENSMUSG00000022375">
    <property type="expression patterns" value="Expressed in spermatid and 62 other cell types or tissues"/>
</dbReference>
<dbReference type="GO" id="GO:0090651">
    <property type="term" value="C:apical cytoplasm"/>
    <property type="evidence" value="ECO:0000314"/>
    <property type="project" value="MGI"/>
</dbReference>
<dbReference type="GO" id="GO:0005737">
    <property type="term" value="C:cytoplasm"/>
    <property type="evidence" value="ECO:0000314"/>
    <property type="project" value="BHF-UCL"/>
</dbReference>
<dbReference type="GO" id="GO:0005829">
    <property type="term" value="C:cytosol"/>
    <property type="evidence" value="ECO:0000314"/>
    <property type="project" value="MGI"/>
</dbReference>
<dbReference type="GO" id="GO:0120293">
    <property type="term" value="C:dynein axonemal particle"/>
    <property type="evidence" value="ECO:0000250"/>
    <property type="project" value="UniProtKB"/>
</dbReference>
<dbReference type="GO" id="GO:0005576">
    <property type="term" value="C:extracellular region"/>
    <property type="evidence" value="ECO:0007669"/>
    <property type="project" value="GOC"/>
</dbReference>
<dbReference type="GO" id="GO:0031514">
    <property type="term" value="C:motile cilium"/>
    <property type="evidence" value="ECO:0007669"/>
    <property type="project" value="UniProtKB-SubCell"/>
</dbReference>
<dbReference type="GO" id="GO:0070286">
    <property type="term" value="P:axonemal dynein complex assembly"/>
    <property type="evidence" value="ECO:0000250"/>
    <property type="project" value="UniProtKB"/>
</dbReference>
<dbReference type="GO" id="GO:0090660">
    <property type="term" value="P:cerebrospinal fluid circulation"/>
    <property type="evidence" value="ECO:0000315"/>
    <property type="project" value="MGI"/>
</dbReference>
<dbReference type="GO" id="GO:0003341">
    <property type="term" value="P:cilium movement"/>
    <property type="evidence" value="ECO:0000315"/>
    <property type="project" value="MGI"/>
</dbReference>
<dbReference type="GO" id="GO:0060287">
    <property type="term" value="P:epithelial cilium movement involved in determination of left/right asymmetry"/>
    <property type="evidence" value="ECO:0000315"/>
    <property type="project" value="MGI"/>
</dbReference>
<dbReference type="GO" id="GO:0003351">
    <property type="term" value="P:epithelial cilium movement involved in extracellular fluid movement"/>
    <property type="evidence" value="ECO:0000315"/>
    <property type="project" value="MGI"/>
</dbReference>
<dbReference type="GO" id="GO:0051649">
    <property type="term" value="P:establishment of localization in cell"/>
    <property type="evidence" value="ECO:0000315"/>
    <property type="project" value="MGI"/>
</dbReference>
<dbReference type="GO" id="GO:0030317">
    <property type="term" value="P:flagellated sperm motility"/>
    <property type="evidence" value="ECO:0000315"/>
    <property type="project" value="MGI"/>
</dbReference>
<dbReference type="GO" id="GO:0036159">
    <property type="term" value="P:inner dynein arm assembly"/>
    <property type="evidence" value="ECO:0007669"/>
    <property type="project" value="Ensembl"/>
</dbReference>
<dbReference type="GO" id="GO:0008584">
    <property type="term" value="P:male gonad development"/>
    <property type="evidence" value="ECO:0000270"/>
    <property type="project" value="BHF-UCL"/>
</dbReference>
<dbReference type="GO" id="GO:0044458">
    <property type="term" value="P:motile cilium assembly"/>
    <property type="evidence" value="ECO:0007669"/>
    <property type="project" value="Ensembl"/>
</dbReference>
<dbReference type="GO" id="GO:0036158">
    <property type="term" value="P:outer dynein arm assembly"/>
    <property type="evidence" value="ECO:0000315"/>
    <property type="project" value="MGI"/>
</dbReference>
<dbReference type="GO" id="GO:0061512">
    <property type="term" value="P:protein localization to cilium"/>
    <property type="evidence" value="ECO:0000315"/>
    <property type="project" value="MGI"/>
</dbReference>
<dbReference type="GO" id="GO:0120229">
    <property type="term" value="P:protein localization to motile cilium"/>
    <property type="evidence" value="ECO:0000250"/>
    <property type="project" value="UniProtKB"/>
</dbReference>
<dbReference type="FunFam" id="3.80.10.10:FF:000052">
    <property type="entry name" value="Leucine rich repeat containing 6"/>
    <property type="match status" value="1"/>
</dbReference>
<dbReference type="Gene3D" id="3.80.10.10">
    <property type="entry name" value="Ribonuclease Inhibitor"/>
    <property type="match status" value="1"/>
</dbReference>
<dbReference type="InterPro" id="IPR056496">
    <property type="entry name" value="CS_DNAAF11_C"/>
</dbReference>
<dbReference type="InterPro" id="IPR001611">
    <property type="entry name" value="Leu-rich_rpt"/>
</dbReference>
<dbReference type="InterPro" id="IPR032675">
    <property type="entry name" value="LRR_dom_sf"/>
</dbReference>
<dbReference type="PANTHER" id="PTHR18849:SF0">
    <property type="entry name" value="CILIA- AND FLAGELLA-ASSOCIATED PROTEIN 410-RELATED"/>
    <property type="match status" value="1"/>
</dbReference>
<dbReference type="PANTHER" id="PTHR18849">
    <property type="entry name" value="LEUCINE RICH REPEAT PROTEIN"/>
    <property type="match status" value="1"/>
</dbReference>
<dbReference type="Pfam" id="PF23602">
    <property type="entry name" value="CS_DNAAF11_C"/>
    <property type="match status" value="1"/>
</dbReference>
<dbReference type="Pfam" id="PF14580">
    <property type="entry name" value="LRR_9"/>
    <property type="match status" value="1"/>
</dbReference>
<dbReference type="SMART" id="SM00365">
    <property type="entry name" value="LRR_SD22"/>
    <property type="match status" value="2"/>
</dbReference>
<dbReference type="SUPFAM" id="SSF52058">
    <property type="entry name" value="L domain-like"/>
    <property type="match status" value="1"/>
</dbReference>
<dbReference type="PROSITE" id="PS51450">
    <property type="entry name" value="LRR"/>
    <property type="match status" value="5"/>
</dbReference>
<keyword id="KW-0966">Cell projection</keyword>
<keyword id="KW-0969">Cilium</keyword>
<keyword id="KW-0175">Coiled coil</keyword>
<keyword id="KW-0963">Cytoplasm</keyword>
<keyword id="KW-0282">Flagellum</keyword>
<keyword id="KW-0433">Leucine-rich repeat</keyword>
<keyword id="KW-1185">Reference proteome</keyword>
<keyword id="KW-0677">Repeat</keyword>
<evidence type="ECO:0000250" key="1">
    <source>
        <dbReference type="UniProtKB" id="Q86X45"/>
    </source>
</evidence>
<evidence type="ECO:0000255" key="2"/>
<evidence type="ECO:0000256" key="3">
    <source>
        <dbReference type="SAM" id="MobiDB-lite"/>
    </source>
</evidence>
<evidence type="ECO:0000269" key="4">
    <source>
    </source>
</evidence>
<evidence type="ECO:0000269" key="5">
    <source>
    </source>
</evidence>
<evidence type="ECO:0000305" key="6"/>
<evidence type="ECO:0000305" key="7">
    <source>
    </source>
</evidence>
<evidence type="ECO:0000312" key="8">
    <source>
        <dbReference type="MGI" id="MGI:1859553"/>
    </source>
</evidence>
<gene>
    <name type="primary">Dnaaf11</name>
    <name evidence="8" type="synonym">Lrrc6</name>
    <name type="synonym">Lrtp</name>
    <name type="synonym">Mc2</name>
</gene>
<organism>
    <name type="scientific">Mus musculus</name>
    <name type="common">Mouse</name>
    <dbReference type="NCBI Taxonomy" id="10090"/>
    <lineage>
        <taxon>Eukaryota</taxon>
        <taxon>Metazoa</taxon>
        <taxon>Chordata</taxon>
        <taxon>Craniata</taxon>
        <taxon>Vertebrata</taxon>
        <taxon>Euteleostomi</taxon>
        <taxon>Mammalia</taxon>
        <taxon>Eutheria</taxon>
        <taxon>Euarchontoglires</taxon>
        <taxon>Glires</taxon>
        <taxon>Rodentia</taxon>
        <taxon>Myomorpha</taxon>
        <taxon>Muroidea</taxon>
        <taxon>Muridae</taxon>
        <taxon>Murinae</taxon>
        <taxon>Mus</taxon>
        <taxon>Mus</taxon>
    </lineage>
</organism>
<reference key="1">
    <citation type="journal article" date="2000" name="Biol. Reprod.">
        <title>Identification of a novel testis-specific leucine-rich protein in humans and mice.</title>
        <authorList>
            <person name="Xue J.-C."/>
            <person name="Goldberg E."/>
        </authorList>
    </citation>
    <scope>NUCLEOTIDE SEQUENCE [MRNA]</scope>
    <scope>SUBCELLULAR LOCATION</scope>
    <scope>TISSUE SPECIFICITY</scope>
    <source>
        <tissue>Testis</tissue>
    </source>
</reference>
<reference key="2">
    <citation type="journal article" date="2005" name="Science">
        <title>The transcriptional landscape of the mammalian genome.</title>
        <authorList>
            <person name="Carninci P."/>
            <person name="Kasukawa T."/>
            <person name="Katayama S."/>
            <person name="Gough J."/>
            <person name="Frith M.C."/>
            <person name="Maeda N."/>
            <person name="Oyama R."/>
            <person name="Ravasi T."/>
            <person name="Lenhard B."/>
            <person name="Wells C."/>
            <person name="Kodzius R."/>
            <person name="Shimokawa K."/>
            <person name="Bajic V.B."/>
            <person name="Brenner S.E."/>
            <person name="Batalov S."/>
            <person name="Forrest A.R."/>
            <person name="Zavolan M."/>
            <person name="Davis M.J."/>
            <person name="Wilming L.G."/>
            <person name="Aidinis V."/>
            <person name="Allen J.E."/>
            <person name="Ambesi-Impiombato A."/>
            <person name="Apweiler R."/>
            <person name="Aturaliya R.N."/>
            <person name="Bailey T.L."/>
            <person name="Bansal M."/>
            <person name="Baxter L."/>
            <person name="Beisel K.W."/>
            <person name="Bersano T."/>
            <person name="Bono H."/>
            <person name="Chalk A.M."/>
            <person name="Chiu K.P."/>
            <person name="Choudhary V."/>
            <person name="Christoffels A."/>
            <person name="Clutterbuck D.R."/>
            <person name="Crowe M.L."/>
            <person name="Dalla E."/>
            <person name="Dalrymple B.P."/>
            <person name="de Bono B."/>
            <person name="Della Gatta G."/>
            <person name="di Bernardo D."/>
            <person name="Down T."/>
            <person name="Engstrom P."/>
            <person name="Fagiolini M."/>
            <person name="Faulkner G."/>
            <person name="Fletcher C.F."/>
            <person name="Fukushima T."/>
            <person name="Furuno M."/>
            <person name="Futaki S."/>
            <person name="Gariboldi M."/>
            <person name="Georgii-Hemming P."/>
            <person name="Gingeras T.R."/>
            <person name="Gojobori T."/>
            <person name="Green R.E."/>
            <person name="Gustincich S."/>
            <person name="Harbers M."/>
            <person name="Hayashi Y."/>
            <person name="Hensch T.K."/>
            <person name="Hirokawa N."/>
            <person name="Hill D."/>
            <person name="Huminiecki L."/>
            <person name="Iacono M."/>
            <person name="Ikeo K."/>
            <person name="Iwama A."/>
            <person name="Ishikawa T."/>
            <person name="Jakt M."/>
            <person name="Kanapin A."/>
            <person name="Katoh M."/>
            <person name="Kawasawa Y."/>
            <person name="Kelso J."/>
            <person name="Kitamura H."/>
            <person name="Kitano H."/>
            <person name="Kollias G."/>
            <person name="Krishnan S.P."/>
            <person name="Kruger A."/>
            <person name="Kummerfeld S.K."/>
            <person name="Kurochkin I.V."/>
            <person name="Lareau L.F."/>
            <person name="Lazarevic D."/>
            <person name="Lipovich L."/>
            <person name="Liu J."/>
            <person name="Liuni S."/>
            <person name="McWilliam S."/>
            <person name="Madan Babu M."/>
            <person name="Madera M."/>
            <person name="Marchionni L."/>
            <person name="Matsuda H."/>
            <person name="Matsuzawa S."/>
            <person name="Miki H."/>
            <person name="Mignone F."/>
            <person name="Miyake S."/>
            <person name="Morris K."/>
            <person name="Mottagui-Tabar S."/>
            <person name="Mulder N."/>
            <person name="Nakano N."/>
            <person name="Nakauchi H."/>
            <person name="Ng P."/>
            <person name="Nilsson R."/>
            <person name="Nishiguchi S."/>
            <person name="Nishikawa S."/>
            <person name="Nori F."/>
            <person name="Ohara O."/>
            <person name="Okazaki Y."/>
            <person name="Orlando V."/>
            <person name="Pang K.C."/>
            <person name="Pavan W.J."/>
            <person name="Pavesi G."/>
            <person name="Pesole G."/>
            <person name="Petrovsky N."/>
            <person name="Piazza S."/>
            <person name="Reed J."/>
            <person name="Reid J.F."/>
            <person name="Ring B.Z."/>
            <person name="Ringwald M."/>
            <person name="Rost B."/>
            <person name="Ruan Y."/>
            <person name="Salzberg S.L."/>
            <person name="Sandelin A."/>
            <person name="Schneider C."/>
            <person name="Schoenbach C."/>
            <person name="Sekiguchi K."/>
            <person name="Semple C.A."/>
            <person name="Seno S."/>
            <person name="Sessa L."/>
            <person name="Sheng Y."/>
            <person name="Shibata Y."/>
            <person name="Shimada H."/>
            <person name="Shimada K."/>
            <person name="Silva D."/>
            <person name="Sinclair B."/>
            <person name="Sperling S."/>
            <person name="Stupka E."/>
            <person name="Sugiura K."/>
            <person name="Sultana R."/>
            <person name="Takenaka Y."/>
            <person name="Taki K."/>
            <person name="Tammoja K."/>
            <person name="Tan S.L."/>
            <person name="Tang S."/>
            <person name="Taylor M.S."/>
            <person name="Tegner J."/>
            <person name="Teichmann S.A."/>
            <person name="Ueda H.R."/>
            <person name="van Nimwegen E."/>
            <person name="Verardo R."/>
            <person name="Wei C.L."/>
            <person name="Yagi K."/>
            <person name="Yamanishi H."/>
            <person name="Zabarovsky E."/>
            <person name="Zhu S."/>
            <person name="Zimmer A."/>
            <person name="Hide W."/>
            <person name="Bult C."/>
            <person name="Grimmond S.M."/>
            <person name="Teasdale R.D."/>
            <person name="Liu E.T."/>
            <person name="Brusic V."/>
            <person name="Quackenbush J."/>
            <person name="Wahlestedt C."/>
            <person name="Mattick J.S."/>
            <person name="Hume D.A."/>
            <person name="Kai C."/>
            <person name="Sasaki D."/>
            <person name="Tomaru Y."/>
            <person name="Fukuda S."/>
            <person name="Kanamori-Katayama M."/>
            <person name="Suzuki M."/>
            <person name="Aoki J."/>
            <person name="Arakawa T."/>
            <person name="Iida J."/>
            <person name="Imamura K."/>
            <person name="Itoh M."/>
            <person name="Kato T."/>
            <person name="Kawaji H."/>
            <person name="Kawagashira N."/>
            <person name="Kawashima T."/>
            <person name="Kojima M."/>
            <person name="Kondo S."/>
            <person name="Konno H."/>
            <person name="Nakano K."/>
            <person name="Ninomiya N."/>
            <person name="Nishio T."/>
            <person name="Okada M."/>
            <person name="Plessy C."/>
            <person name="Shibata K."/>
            <person name="Shiraki T."/>
            <person name="Suzuki S."/>
            <person name="Tagami M."/>
            <person name="Waki K."/>
            <person name="Watahiki A."/>
            <person name="Okamura-Oho Y."/>
            <person name="Suzuki H."/>
            <person name="Kawai J."/>
            <person name="Hayashizaki Y."/>
        </authorList>
    </citation>
    <scope>NUCLEOTIDE SEQUENCE [LARGE SCALE MRNA]</scope>
    <source>
        <strain>C57BL/6J</strain>
        <tissue>Testis</tissue>
    </source>
</reference>
<reference key="3">
    <citation type="journal article" date="2004" name="Genome Res.">
        <title>The status, quality, and expansion of the NIH full-length cDNA project: the Mammalian Gene Collection (MGC).</title>
        <authorList>
            <consortium name="The MGC Project Team"/>
        </authorList>
    </citation>
    <scope>NUCLEOTIDE SEQUENCE [LARGE SCALE MRNA]</scope>
    <source>
        <tissue>Olfactory epithelium</tissue>
    </source>
</reference>
<reference key="4">
    <citation type="journal article" date="2010" name="Cell">
        <title>A tissue-specific atlas of mouse protein phosphorylation and expression.</title>
        <authorList>
            <person name="Huttlin E.L."/>
            <person name="Jedrychowski M.P."/>
            <person name="Elias J.E."/>
            <person name="Goswami T."/>
            <person name="Rad R."/>
            <person name="Beausoleil S.A."/>
            <person name="Villen J."/>
            <person name="Haas W."/>
            <person name="Sowa M.E."/>
            <person name="Gygi S.P."/>
        </authorList>
    </citation>
    <scope>IDENTIFICATION BY MASS SPECTROMETRY [LARGE SCALE ANALYSIS]</scope>
    <source>
        <tissue>Testis</tissue>
    </source>
</reference>
<reference key="5">
    <citation type="journal article" date="2016" name="Genes Cells">
        <title>Transport of the outer dynein arm complex to cilia requires a cytoplasmic protein Lrrc6.</title>
        <authorList>
            <person name="Inaba Y."/>
            <person name="Shinohara K."/>
            <person name="Botilde Y."/>
            <person name="Nabeshima R."/>
            <person name="Takaoka K."/>
            <person name="Ajima R."/>
            <person name="Lamri L."/>
            <person name="Takeda H."/>
            <person name="Saga Y."/>
            <person name="Nakamura T."/>
            <person name="Hamada H."/>
        </authorList>
    </citation>
    <scope>FUNCTION</scope>
    <scope>DISRUPTION PHENOTYPE</scope>
    <scope>DEVELOPMENTAL STAGE</scope>
    <scope>TISSUE SPECIFICITY</scope>
</reference>
<name>DAA11_MOUSE</name>
<protein>
    <recommendedName>
        <fullName evidence="6">Dynein axonemal assembly factor 11</fullName>
        <shortName evidence="6">DNAAF11</shortName>
    </recommendedName>
    <alternativeName>
        <fullName>Leucine-rich repeat-containing protein 6</fullName>
    </alternativeName>
    <alternativeName>
        <fullName>Leucine-rich testis-specific protein</fullName>
    </alternativeName>
    <alternativeName>
        <fullName>Protein tilB homolog</fullName>
    </alternativeName>
    <alternativeName>
        <fullName>Testis-specific leucine-rich repeat protein</fullName>
    </alternativeName>
</protein>
<comment type="function">
    <text evidence="1 5">Involved in dynein arm assembly, is important for expression and transporting outer dynein arm (ODA) proteins from the cytoplasm to the cilia (PubMed:27353389). Acts as a crucial component in the formation and motility of spermatozoal flagella (By similarity).</text>
</comment>
<comment type="subunit">
    <text evidence="1">Interacts (via CS domain) with ZMYND10 (via C-terminus).</text>
</comment>
<comment type="subcellular location">
    <subcellularLocation>
        <location evidence="4 5">Cytoplasm</location>
    </subcellularLocation>
    <subcellularLocation>
        <location evidence="1">Cell projection</location>
        <location evidence="1">Cilium</location>
    </subcellularLocation>
    <subcellularLocation>
        <location evidence="7">Dynein axonemal particle</location>
    </subcellularLocation>
    <subcellularLocation>
        <location evidence="1">Cell projection</location>
        <location evidence="1">Cilium</location>
        <location evidence="1">Flagellum</location>
    </subcellularLocation>
</comment>
<comment type="tissue specificity">
    <text evidence="4 5">Mainly expressed in cells with motile cilia (PubMed:27353389). Expressed in epithelial cells of the trachea, testis and ependymal cells of the cerebral ventricles (PubMed:27353389). In testis, abundant expression in late prophase of meiosis I with a dramatic decrease after the first meiotic division (at protein level) (PubMed:10775177).</text>
</comment>
<comment type="developmental stage">
    <text evidence="5">At the embryonic day 8.0 dpc, expressed at the node, especially in pit cells, which are located at the central region of the node and possess motile cilia. At later stages, expression is detected in the notochord at 9.0 dpc, in the hindbrain, the branchial arches and neural tube at 11.0 dpc, in the hindbrain at 12.0 dpc and in the forebrain at 13.0 dpc.</text>
</comment>
<comment type="disruption phenotype">
    <text evidence="5">Mutant mice show primary ciliary dyskinesia defects such as hydrocephalus and laterality defects and die within 5 weeks of birth. The morphology of mutant motile cilia is normal, but their motility is completely lost. The 9 + 2 arrangement of microtubules remain normal in mutants, but the outer dynein arms (ODAs) is absent from the cilia.</text>
</comment>
<comment type="similarity">
    <text evidence="6">Belongs to the tilB family.</text>
</comment>